<name>RUVB_CHRVO</name>
<gene>
    <name evidence="1" type="primary">ruvB</name>
    <name type="ordered locus">CV_4215</name>
</gene>
<organism>
    <name type="scientific">Chromobacterium violaceum (strain ATCC 12472 / DSM 30191 / JCM 1249 / CCUG 213 / NBRC 12614 / NCIMB 9131 / NCTC 9757 / MK)</name>
    <dbReference type="NCBI Taxonomy" id="243365"/>
    <lineage>
        <taxon>Bacteria</taxon>
        <taxon>Pseudomonadati</taxon>
        <taxon>Pseudomonadota</taxon>
        <taxon>Betaproteobacteria</taxon>
        <taxon>Neisseriales</taxon>
        <taxon>Chromobacteriaceae</taxon>
        <taxon>Chromobacterium</taxon>
    </lineage>
</organism>
<feature type="chain" id="PRO_0000165518" description="Holliday junction branch migration complex subunit RuvB">
    <location>
        <begin position="1"/>
        <end position="345"/>
    </location>
</feature>
<feature type="region of interest" description="Large ATPase domain (RuvB-L)" evidence="1">
    <location>
        <begin position="4"/>
        <end position="194"/>
    </location>
</feature>
<feature type="region of interest" description="Small ATPAse domain (RuvB-S)" evidence="1">
    <location>
        <begin position="195"/>
        <end position="265"/>
    </location>
</feature>
<feature type="region of interest" description="Head domain (RuvB-H)" evidence="1">
    <location>
        <begin position="268"/>
        <end position="345"/>
    </location>
</feature>
<feature type="binding site" evidence="1">
    <location>
        <position position="33"/>
    </location>
    <ligand>
        <name>ATP</name>
        <dbReference type="ChEBI" id="CHEBI:30616"/>
    </ligand>
</feature>
<feature type="binding site" evidence="1">
    <location>
        <position position="34"/>
    </location>
    <ligand>
        <name>ATP</name>
        <dbReference type="ChEBI" id="CHEBI:30616"/>
    </ligand>
</feature>
<feature type="binding site" evidence="1">
    <location>
        <position position="75"/>
    </location>
    <ligand>
        <name>ATP</name>
        <dbReference type="ChEBI" id="CHEBI:30616"/>
    </ligand>
</feature>
<feature type="binding site" evidence="1">
    <location>
        <position position="78"/>
    </location>
    <ligand>
        <name>ATP</name>
        <dbReference type="ChEBI" id="CHEBI:30616"/>
    </ligand>
</feature>
<feature type="binding site" evidence="1">
    <location>
        <position position="79"/>
    </location>
    <ligand>
        <name>ATP</name>
        <dbReference type="ChEBI" id="CHEBI:30616"/>
    </ligand>
</feature>
<feature type="binding site" evidence="1">
    <location>
        <position position="79"/>
    </location>
    <ligand>
        <name>Mg(2+)</name>
        <dbReference type="ChEBI" id="CHEBI:18420"/>
    </ligand>
</feature>
<feature type="binding site" evidence="1">
    <location>
        <position position="80"/>
    </location>
    <ligand>
        <name>ATP</name>
        <dbReference type="ChEBI" id="CHEBI:30616"/>
    </ligand>
</feature>
<feature type="binding site" evidence="1">
    <location>
        <begin position="141"/>
        <end position="143"/>
    </location>
    <ligand>
        <name>ATP</name>
        <dbReference type="ChEBI" id="CHEBI:30616"/>
    </ligand>
</feature>
<feature type="binding site" evidence="1">
    <location>
        <position position="184"/>
    </location>
    <ligand>
        <name>ATP</name>
        <dbReference type="ChEBI" id="CHEBI:30616"/>
    </ligand>
</feature>
<feature type="binding site" evidence="1">
    <location>
        <position position="194"/>
    </location>
    <ligand>
        <name>ATP</name>
        <dbReference type="ChEBI" id="CHEBI:30616"/>
    </ligand>
</feature>
<feature type="binding site" evidence="1">
    <location>
        <position position="231"/>
    </location>
    <ligand>
        <name>ATP</name>
        <dbReference type="ChEBI" id="CHEBI:30616"/>
    </ligand>
</feature>
<feature type="binding site" evidence="1">
    <location>
        <position position="323"/>
    </location>
    <ligand>
        <name>DNA</name>
        <dbReference type="ChEBI" id="CHEBI:16991"/>
    </ligand>
</feature>
<feature type="binding site" evidence="1">
    <location>
        <position position="328"/>
    </location>
    <ligand>
        <name>DNA</name>
        <dbReference type="ChEBI" id="CHEBI:16991"/>
    </ligand>
</feature>
<reference key="1">
    <citation type="journal article" date="2003" name="Proc. Natl. Acad. Sci. U.S.A.">
        <title>The complete genome sequence of Chromobacterium violaceum reveals remarkable and exploitable bacterial adaptability.</title>
        <authorList>
            <person name="Vasconcelos A.T.R."/>
            <person name="de Almeida D.F."/>
            <person name="Hungria M."/>
            <person name="Guimaraes C.T."/>
            <person name="Antonio R.V."/>
            <person name="Almeida F.C."/>
            <person name="de Almeida L.G.P."/>
            <person name="de Almeida R."/>
            <person name="Alves-Gomes J.A."/>
            <person name="Andrade E.M."/>
            <person name="Araripe J."/>
            <person name="de Araujo M.F.F."/>
            <person name="Astolfi-Filho S."/>
            <person name="Azevedo V."/>
            <person name="Baptista A.J."/>
            <person name="Bataus L.A.M."/>
            <person name="Batista J.S."/>
            <person name="Belo A."/>
            <person name="van den Berg C."/>
            <person name="Bogo M."/>
            <person name="Bonatto S."/>
            <person name="Bordignon J."/>
            <person name="Brigido M.M."/>
            <person name="Brito C.A."/>
            <person name="Brocchi M."/>
            <person name="Burity H.A."/>
            <person name="Camargo A.A."/>
            <person name="Cardoso D.D.P."/>
            <person name="Carneiro N.P."/>
            <person name="Carraro D.M."/>
            <person name="Carvalho C.M.B."/>
            <person name="Cascardo J.C.M."/>
            <person name="Cavada B.S."/>
            <person name="Chueire L.M.O."/>
            <person name="Creczynski-Pasa T.B."/>
            <person name="Cunha-Junior N.C."/>
            <person name="Fagundes N."/>
            <person name="Falcao C.L."/>
            <person name="Fantinatti F."/>
            <person name="Farias I.P."/>
            <person name="Felipe M.S.S."/>
            <person name="Ferrari L.P."/>
            <person name="Ferro J.A."/>
            <person name="Ferro M.I.T."/>
            <person name="Franco G.R."/>
            <person name="Freitas N.S.A."/>
            <person name="Furlan L.R."/>
            <person name="Gazzinelli R.T."/>
            <person name="Gomes E.A."/>
            <person name="Goncalves P.R."/>
            <person name="Grangeiro T.B."/>
            <person name="Grattapaglia D."/>
            <person name="Grisard E.C."/>
            <person name="Hanna E.S."/>
            <person name="Jardim S.N."/>
            <person name="Laurino J."/>
            <person name="Leoi L.C.T."/>
            <person name="Lima L.F.A."/>
            <person name="Loureiro M.F."/>
            <person name="Lyra M.C.C.P."/>
            <person name="Madeira H.M.F."/>
            <person name="Manfio G.P."/>
            <person name="Maranhao A.Q."/>
            <person name="Martins W.S."/>
            <person name="di Mauro S.M.Z."/>
            <person name="de Medeiros S.R.B."/>
            <person name="Meissner R.V."/>
            <person name="Moreira M.A.M."/>
            <person name="Nascimento F.F."/>
            <person name="Nicolas M.F."/>
            <person name="Oliveira J.G."/>
            <person name="Oliveira S.C."/>
            <person name="Paixao R.F.C."/>
            <person name="Parente J.A."/>
            <person name="Pedrosa F.O."/>
            <person name="Pena S.D.J."/>
            <person name="Pereira J.O."/>
            <person name="Pereira M."/>
            <person name="Pinto L.S.R.C."/>
            <person name="Pinto L.S."/>
            <person name="Porto J.I.R."/>
            <person name="Potrich D.P."/>
            <person name="Ramalho-Neto C.E."/>
            <person name="Reis A.M.M."/>
            <person name="Rigo L.U."/>
            <person name="Rondinelli E."/>
            <person name="Santos E.B.P."/>
            <person name="Santos F.R."/>
            <person name="Schneider M.P.C."/>
            <person name="Seuanez H.N."/>
            <person name="Silva A.M.R."/>
            <person name="da Silva A.L.C."/>
            <person name="Silva D.W."/>
            <person name="Silva R."/>
            <person name="Simoes I.C."/>
            <person name="Simon D."/>
            <person name="Soares C.M.A."/>
            <person name="Soares R.B.A."/>
            <person name="Souza E.M."/>
            <person name="Souza K.R.L."/>
            <person name="Souza R.C."/>
            <person name="Steffens M.B.R."/>
            <person name="Steindel M."/>
            <person name="Teixeira S.R."/>
            <person name="Urmenyi T."/>
            <person name="Vettore A."/>
            <person name="Wassem R."/>
            <person name="Zaha A."/>
            <person name="Simpson A.J.G."/>
        </authorList>
    </citation>
    <scope>NUCLEOTIDE SEQUENCE [LARGE SCALE GENOMIC DNA]</scope>
    <source>
        <strain>ATCC 12472 / DSM 30191 / JCM 1249 / CCUG 213 / NBRC 12614 / NCIMB 9131 / NCTC 9757 / MK</strain>
    </source>
</reference>
<accession>Q7NQC5</accession>
<comment type="function">
    <text evidence="1">The RuvA-RuvB-RuvC complex processes Holliday junction (HJ) DNA during genetic recombination and DNA repair, while the RuvA-RuvB complex plays an important role in the rescue of blocked DNA replication forks via replication fork reversal (RFR). RuvA specifically binds to HJ cruciform DNA, conferring on it an open structure. The RuvB hexamer acts as an ATP-dependent pump, pulling dsDNA into and through the RuvAB complex. RuvB forms 2 homohexamers on either side of HJ DNA bound by 1 or 2 RuvA tetramers; 4 subunits per hexamer contact DNA at a time. Coordinated motions by a converter formed by DNA-disengaged RuvB subunits stimulates ATP hydrolysis and nucleotide exchange. Immobilization of the converter enables RuvB to convert the ATP-contained energy into a lever motion, pulling 2 nucleotides of DNA out of the RuvA tetramer per ATP hydrolyzed, thus driving DNA branch migration. The RuvB motors rotate together with the DNA substrate, which together with the progressing nucleotide cycle form the mechanistic basis for DNA recombination by continuous HJ branch migration. Branch migration allows RuvC to scan DNA until it finds its consensus sequence, where it cleaves and resolves cruciform DNA.</text>
</comment>
<comment type="catalytic activity">
    <reaction evidence="1">
        <text>ATP + H2O = ADP + phosphate + H(+)</text>
        <dbReference type="Rhea" id="RHEA:13065"/>
        <dbReference type="ChEBI" id="CHEBI:15377"/>
        <dbReference type="ChEBI" id="CHEBI:15378"/>
        <dbReference type="ChEBI" id="CHEBI:30616"/>
        <dbReference type="ChEBI" id="CHEBI:43474"/>
        <dbReference type="ChEBI" id="CHEBI:456216"/>
    </reaction>
</comment>
<comment type="subunit">
    <text evidence="1">Homohexamer. Forms an RuvA(8)-RuvB(12)-Holliday junction (HJ) complex. HJ DNA is sandwiched between 2 RuvA tetramers; dsDNA enters through RuvA and exits via RuvB. An RuvB hexamer assembles on each DNA strand where it exits the tetramer. Each RuvB hexamer is contacted by two RuvA subunits (via domain III) on 2 adjacent RuvB subunits; this complex drives branch migration. In the full resolvosome a probable DNA-RuvA(4)-RuvB(12)-RuvC(2) complex forms which resolves the HJ.</text>
</comment>
<comment type="subcellular location">
    <subcellularLocation>
        <location evidence="1">Cytoplasm</location>
    </subcellularLocation>
</comment>
<comment type="domain">
    <text evidence="1">Has 3 domains, the large (RuvB-L) and small ATPase (RuvB-S) domains and the C-terminal head (RuvB-H) domain. The head domain binds DNA, while the ATPase domains jointly bind ATP, ADP or are empty depending on the state of the subunit in the translocation cycle. During a single DNA translocation step the structure of each domain remains the same, but their relative positions change.</text>
</comment>
<comment type="similarity">
    <text evidence="1">Belongs to the RuvB family.</text>
</comment>
<sequence>MIETDKLFGAAPERRIVTPQRASEQEEALERALRPKLLDEYVGQKKAREQLEIFIEAAKKRGEALDHVLLFGPPGLGKTTLAHIVAREMGVNLRQTSGPVLERAGDLAALLTNLEPHDVLFIDEIHRLSPVVEEILYPALEDYQIDIMIGEGPAARSVKIDLPPFTLVGATTRAGMLTNPLRDRFGIVARLEFYNAEELTRIVSRSAGLLNVQLSDDGAFEVAKRSRGTPRIANRLLRRVRDYAEVKSDGVVTMAVADAALAMLDVDPAGLDVMDRKLLQAILEKFSGGPVGLDNVAAAIGESTDTIEDVIEPFLIQQGYLQRTPRGRMATAQAYLHFGLPVKDA</sequence>
<protein>
    <recommendedName>
        <fullName evidence="1">Holliday junction branch migration complex subunit RuvB</fullName>
        <ecNumber evidence="1">3.6.4.-</ecNumber>
    </recommendedName>
</protein>
<proteinExistence type="inferred from homology"/>
<evidence type="ECO:0000255" key="1">
    <source>
        <dbReference type="HAMAP-Rule" id="MF_00016"/>
    </source>
</evidence>
<dbReference type="EC" id="3.6.4.-" evidence="1"/>
<dbReference type="EMBL" id="AE016825">
    <property type="protein sequence ID" value="AAQ61875.1"/>
    <property type="molecule type" value="Genomic_DNA"/>
</dbReference>
<dbReference type="RefSeq" id="WP_011137761.1">
    <property type="nucleotide sequence ID" value="NC_005085.1"/>
</dbReference>
<dbReference type="SMR" id="Q7NQC5"/>
<dbReference type="STRING" id="243365.CV_4215"/>
<dbReference type="GeneID" id="66366307"/>
<dbReference type="KEGG" id="cvi:CV_4215"/>
<dbReference type="eggNOG" id="COG2255">
    <property type="taxonomic scope" value="Bacteria"/>
</dbReference>
<dbReference type="HOGENOM" id="CLU_055599_1_0_4"/>
<dbReference type="OrthoDB" id="9804478at2"/>
<dbReference type="Proteomes" id="UP000001424">
    <property type="component" value="Chromosome"/>
</dbReference>
<dbReference type="GO" id="GO:0005737">
    <property type="term" value="C:cytoplasm"/>
    <property type="evidence" value="ECO:0007669"/>
    <property type="project" value="UniProtKB-SubCell"/>
</dbReference>
<dbReference type="GO" id="GO:0048476">
    <property type="term" value="C:Holliday junction resolvase complex"/>
    <property type="evidence" value="ECO:0007669"/>
    <property type="project" value="UniProtKB-UniRule"/>
</dbReference>
<dbReference type="GO" id="GO:0005524">
    <property type="term" value="F:ATP binding"/>
    <property type="evidence" value="ECO:0007669"/>
    <property type="project" value="UniProtKB-UniRule"/>
</dbReference>
<dbReference type="GO" id="GO:0016887">
    <property type="term" value="F:ATP hydrolysis activity"/>
    <property type="evidence" value="ECO:0007669"/>
    <property type="project" value="InterPro"/>
</dbReference>
<dbReference type="GO" id="GO:0000400">
    <property type="term" value="F:four-way junction DNA binding"/>
    <property type="evidence" value="ECO:0007669"/>
    <property type="project" value="UniProtKB-UniRule"/>
</dbReference>
<dbReference type="GO" id="GO:0009378">
    <property type="term" value="F:four-way junction helicase activity"/>
    <property type="evidence" value="ECO:0007669"/>
    <property type="project" value="InterPro"/>
</dbReference>
<dbReference type="GO" id="GO:0006310">
    <property type="term" value="P:DNA recombination"/>
    <property type="evidence" value="ECO:0007669"/>
    <property type="project" value="UniProtKB-UniRule"/>
</dbReference>
<dbReference type="GO" id="GO:0006281">
    <property type="term" value="P:DNA repair"/>
    <property type="evidence" value="ECO:0007669"/>
    <property type="project" value="UniProtKB-UniRule"/>
</dbReference>
<dbReference type="CDD" id="cd00009">
    <property type="entry name" value="AAA"/>
    <property type="match status" value="1"/>
</dbReference>
<dbReference type="FunFam" id="1.10.10.10:FF:000086">
    <property type="entry name" value="Holliday junction ATP-dependent DNA helicase RuvB"/>
    <property type="match status" value="1"/>
</dbReference>
<dbReference type="FunFam" id="1.10.8.60:FF:000023">
    <property type="entry name" value="Holliday junction ATP-dependent DNA helicase RuvB"/>
    <property type="match status" value="1"/>
</dbReference>
<dbReference type="FunFam" id="3.40.50.300:FF:000073">
    <property type="entry name" value="Holliday junction ATP-dependent DNA helicase RuvB"/>
    <property type="match status" value="1"/>
</dbReference>
<dbReference type="Gene3D" id="1.10.8.60">
    <property type="match status" value="1"/>
</dbReference>
<dbReference type="Gene3D" id="3.40.50.300">
    <property type="entry name" value="P-loop containing nucleotide triphosphate hydrolases"/>
    <property type="match status" value="1"/>
</dbReference>
<dbReference type="Gene3D" id="1.10.10.10">
    <property type="entry name" value="Winged helix-like DNA-binding domain superfamily/Winged helix DNA-binding domain"/>
    <property type="match status" value="1"/>
</dbReference>
<dbReference type="HAMAP" id="MF_00016">
    <property type="entry name" value="DNA_HJ_migration_RuvB"/>
    <property type="match status" value="1"/>
</dbReference>
<dbReference type="InterPro" id="IPR003593">
    <property type="entry name" value="AAA+_ATPase"/>
</dbReference>
<dbReference type="InterPro" id="IPR041445">
    <property type="entry name" value="AAA_lid_4"/>
</dbReference>
<dbReference type="InterPro" id="IPR004605">
    <property type="entry name" value="DNA_helicase_Holl-junc_RuvB"/>
</dbReference>
<dbReference type="InterPro" id="IPR027417">
    <property type="entry name" value="P-loop_NTPase"/>
</dbReference>
<dbReference type="InterPro" id="IPR008824">
    <property type="entry name" value="RuvB-like_N"/>
</dbReference>
<dbReference type="InterPro" id="IPR008823">
    <property type="entry name" value="RuvB_C"/>
</dbReference>
<dbReference type="InterPro" id="IPR036388">
    <property type="entry name" value="WH-like_DNA-bd_sf"/>
</dbReference>
<dbReference type="InterPro" id="IPR036390">
    <property type="entry name" value="WH_DNA-bd_sf"/>
</dbReference>
<dbReference type="NCBIfam" id="NF000868">
    <property type="entry name" value="PRK00080.1"/>
    <property type="match status" value="1"/>
</dbReference>
<dbReference type="NCBIfam" id="TIGR00635">
    <property type="entry name" value="ruvB"/>
    <property type="match status" value="1"/>
</dbReference>
<dbReference type="PANTHER" id="PTHR42848">
    <property type="match status" value="1"/>
</dbReference>
<dbReference type="PANTHER" id="PTHR42848:SF1">
    <property type="entry name" value="HOLLIDAY JUNCTION BRANCH MIGRATION COMPLEX SUBUNIT RUVB"/>
    <property type="match status" value="1"/>
</dbReference>
<dbReference type="Pfam" id="PF17864">
    <property type="entry name" value="AAA_lid_4"/>
    <property type="match status" value="1"/>
</dbReference>
<dbReference type="Pfam" id="PF05491">
    <property type="entry name" value="RuvB_C"/>
    <property type="match status" value="1"/>
</dbReference>
<dbReference type="Pfam" id="PF05496">
    <property type="entry name" value="RuvB_N"/>
    <property type="match status" value="1"/>
</dbReference>
<dbReference type="SMART" id="SM00382">
    <property type="entry name" value="AAA"/>
    <property type="match status" value="1"/>
</dbReference>
<dbReference type="SUPFAM" id="SSF52540">
    <property type="entry name" value="P-loop containing nucleoside triphosphate hydrolases"/>
    <property type="match status" value="1"/>
</dbReference>
<dbReference type="SUPFAM" id="SSF46785">
    <property type="entry name" value="Winged helix' DNA-binding domain"/>
    <property type="match status" value="1"/>
</dbReference>
<keyword id="KW-0067">ATP-binding</keyword>
<keyword id="KW-0963">Cytoplasm</keyword>
<keyword id="KW-0227">DNA damage</keyword>
<keyword id="KW-0233">DNA recombination</keyword>
<keyword id="KW-0234">DNA repair</keyword>
<keyword id="KW-0238">DNA-binding</keyword>
<keyword id="KW-0378">Hydrolase</keyword>
<keyword id="KW-0547">Nucleotide-binding</keyword>
<keyword id="KW-1185">Reference proteome</keyword>